<evidence type="ECO:0000255" key="1">
    <source>
        <dbReference type="HAMAP-Rule" id="MF_00378"/>
    </source>
</evidence>
<organism>
    <name type="scientific">Escherichia coli O81 (strain ED1a)</name>
    <dbReference type="NCBI Taxonomy" id="585397"/>
    <lineage>
        <taxon>Bacteria</taxon>
        <taxon>Pseudomonadati</taxon>
        <taxon>Pseudomonadota</taxon>
        <taxon>Gammaproteobacteria</taxon>
        <taxon>Enterobacterales</taxon>
        <taxon>Enterobacteriaceae</taxon>
        <taxon>Escherichia</taxon>
    </lineage>
</organism>
<gene>
    <name evidence="1" type="primary">xseA</name>
    <name type="ordered locus">ECED1_2933</name>
</gene>
<comment type="function">
    <text evidence="1">Bidirectionally degrades single-stranded DNA into large acid-insoluble oligonucleotides, which are then degraded further into small acid-soluble oligonucleotides.</text>
</comment>
<comment type="catalytic activity">
    <reaction evidence="1">
        <text>Exonucleolytic cleavage in either 5'- to 3'- or 3'- to 5'-direction to yield nucleoside 5'-phosphates.</text>
        <dbReference type="EC" id="3.1.11.6"/>
    </reaction>
</comment>
<comment type="subunit">
    <text evidence="1">Heterooligomer composed of large and small subunits.</text>
</comment>
<comment type="subcellular location">
    <subcellularLocation>
        <location evidence="1">Cytoplasm</location>
    </subcellularLocation>
</comment>
<comment type="similarity">
    <text evidence="1">Belongs to the XseA family.</text>
</comment>
<keyword id="KW-0963">Cytoplasm</keyword>
<keyword id="KW-0269">Exonuclease</keyword>
<keyword id="KW-0378">Hydrolase</keyword>
<keyword id="KW-0540">Nuclease</keyword>
<accession>B7MYD7</accession>
<dbReference type="EC" id="3.1.11.6" evidence="1"/>
<dbReference type="EMBL" id="CU928162">
    <property type="protein sequence ID" value="CAR09103.2"/>
    <property type="molecule type" value="Genomic_DNA"/>
</dbReference>
<dbReference type="RefSeq" id="WP_000937951.1">
    <property type="nucleotide sequence ID" value="NC_011745.1"/>
</dbReference>
<dbReference type="SMR" id="B7MYD7"/>
<dbReference type="KEGG" id="ecq:ECED1_2933"/>
<dbReference type="HOGENOM" id="CLU_023625_3_1_6"/>
<dbReference type="Proteomes" id="UP000000748">
    <property type="component" value="Chromosome"/>
</dbReference>
<dbReference type="GO" id="GO:0005737">
    <property type="term" value="C:cytoplasm"/>
    <property type="evidence" value="ECO:0007669"/>
    <property type="project" value="UniProtKB-SubCell"/>
</dbReference>
<dbReference type="GO" id="GO:0009318">
    <property type="term" value="C:exodeoxyribonuclease VII complex"/>
    <property type="evidence" value="ECO:0007669"/>
    <property type="project" value="InterPro"/>
</dbReference>
<dbReference type="GO" id="GO:0008855">
    <property type="term" value="F:exodeoxyribonuclease VII activity"/>
    <property type="evidence" value="ECO:0007669"/>
    <property type="project" value="UniProtKB-UniRule"/>
</dbReference>
<dbReference type="GO" id="GO:0003676">
    <property type="term" value="F:nucleic acid binding"/>
    <property type="evidence" value="ECO:0007669"/>
    <property type="project" value="InterPro"/>
</dbReference>
<dbReference type="GO" id="GO:0006308">
    <property type="term" value="P:DNA catabolic process"/>
    <property type="evidence" value="ECO:0007669"/>
    <property type="project" value="UniProtKB-UniRule"/>
</dbReference>
<dbReference type="CDD" id="cd04489">
    <property type="entry name" value="ExoVII_LU_OBF"/>
    <property type="match status" value="1"/>
</dbReference>
<dbReference type="HAMAP" id="MF_00378">
    <property type="entry name" value="Exonuc_7_L"/>
    <property type="match status" value="1"/>
</dbReference>
<dbReference type="InterPro" id="IPR003753">
    <property type="entry name" value="Exonuc_VII_L"/>
</dbReference>
<dbReference type="InterPro" id="IPR020579">
    <property type="entry name" value="Exonuc_VII_lsu_C"/>
</dbReference>
<dbReference type="InterPro" id="IPR025824">
    <property type="entry name" value="OB-fold_nuc-bd_dom"/>
</dbReference>
<dbReference type="NCBIfam" id="TIGR00237">
    <property type="entry name" value="xseA"/>
    <property type="match status" value="1"/>
</dbReference>
<dbReference type="PANTHER" id="PTHR30008">
    <property type="entry name" value="EXODEOXYRIBONUCLEASE 7 LARGE SUBUNIT"/>
    <property type="match status" value="1"/>
</dbReference>
<dbReference type="PANTHER" id="PTHR30008:SF0">
    <property type="entry name" value="EXODEOXYRIBONUCLEASE 7 LARGE SUBUNIT"/>
    <property type="match status" value="1"/>
</dbReference>
<dbReference type="Pfam" id="PF02601">
    <property type="entry name" value="Exonuc_VII_L"/>
    <property type="match status" value="1"/>
</dbReference>
<dbReference type="Pfam" id="PF13742">
    <property type="entry name" value="tRNA_anti_2"/>
    <property type="match status" value="1"/>
</dbReference>
<name>EX7L_ECO81</name>
<protein>
    <recommendedName>
        <fullName evidence="1">Exodeoxyribonuclease 7 large subunit</fullName>
        <ecNumber evidence="1">3.1.11.6</ecNumber>
    </recommendedName>
    <alternativeName>
        <fullName evidence="1">Exodeoxyribonuclease VII large subunit</fullName>
        <shortName evidence="1">Exonuclease VII large subunit</shortName>
    </alternativeName>
</protein>
<reference key="1">
    <citation type="journal article" date="2009" name="PLoS Genet.">
        <title>Organised genome dynamics in the Escherichia coli species results in highly diverse adaptive paths.</title>
        <authorList>
            <person name="Touchon M."/>
            <person name="Hoede C."/>
            <person name="Tenaillon O."/>
            <person name="Barbe V."/>
            <person name="Baeriswyl S."/>
            <person name="Bidet P."/>
            <person name="Bingen E."/>
            <person name="Bonacorsi S."/>
            <person name="Bouchier C."/>
            <person name="Bouvet O."/>
            <person name="Calteau A."/>
            <person name="Chiapello H."/>
            <person name="Clermont O."/>
            <person name="Cruveiller S."/>
            <person name="Danchin A."/>
            <person name="Diard M."/>
            <person name="Dossat C."/>
            <person name="Karoui M.E."/>
            <person name="Frapy E."/>
            <person name="Garry L."/>
            <person name="Ghigo J.M."/>
            <person name="Gilles A.M."/>
            <person name="Johnson J."/>
            <person name="Le Bouguenec C."/>
            <person name="Lescat M."/>
            <person name="Mangenot S."/>
            <person name="Martinez-Jehanne V."/>
            <person name="Matic I."/>
            <person name="Nassif X."/>
            <person name="Oztas S."/>
            <person name="Petit M.A."/>
            <person name="Pichon C."/>
            <person name="Rouy Z."/>
            <person name="Ruf C.S."/>
            <person name="Schneider D."/>
            <person name="Tourret J."/>
            <person name="Vacherie B."/>
            <person name="Vallenet D."/>
            <person name="Medigue C."/>
            <person name="Rocha E.P.C."/>
            <person name="Denamur E."/>
        </authorList>
    </citation>
    <scope>NUCLEOTIDE SEQUENCE [LARGE SCALE GENOMIC DNA]</scope>
    <source>
        <strain>ED1a</strain>
    </source>
</reference>
<sequence>MLPSQSPAIFTVSRLNQTVRLLLEHEMGQVWISGEISNFTQPASGHWYFTLKDDTAQVRCAMFRNSNRRVTFRPQHGQQVLVRANITLYEPRGDYQIIVESMQPAGEGLLQQKYEQLKAKLQTEGLFDLQYKKSLPSPAHCVGVITSKTGAALHDILHVLKRRDPSLPVIIYSTAVQGDDAPGQIVRAIELANKRNECDVLIVGRGGGSLEDLWSFNDERVARAIFASRIPIVSAVGHETDVTIADFVADLRAPTPSAAAEVVSRNQQELLRQVQSTRQRLEMAMDYYLANRTRRFTQIHHRLQQQHPQLRLARQQTMLERLQKRMSFALENQLKRAGQQQQRLTRQLVQQNPQSRIHRAQTRIQQLEYRLAETLRAQLSATRERFGNAVTHLEAVSPLSTLARGYSVTSAADGAVLKQVKQVKVGETLITRLGDGVVISEVSAVTKTRKSRKKTSNP</sequence>
<feature type="chain" id="PRO_1000200671" description="Exodeoxyribonuclease 7 large subunit">
    <location>
        <begin position="1"/>
        <end position="458"/>
    </location>
</feature>
<proteinExistence type="inferred from homology"/>